<dbReference type="EMBL" id="AC004411">
    <property type="protein sequence ID" value="AAC34225.1"/>
    <property type="molecule type" value="Genomic_DNA"/>
</dbReference>
<dbReference type="EMBL" id="CP002685">
    <property type="protein sequence ID" value="AEC10785.1"/>
    <property type="molecule type" value="Genomic_DNA"/>
</dbReference>
<dbReference type="EMBL" id="CP002685">
    <property type="protein sequence ID" value="ANM61709.1"/>
    <property type="molecule type" value="Genomic_DNA"/>
</dbReference>
<dbReference type="EMBL" id="CP002685">
    <property type="protein sequence ID" value="ANM61712.1"/>
    <property type="molecule type" value="Genomic_DNA"/>
</dbReference>
<dbReference type="PIR" id="T02187">
    <property type="entry name" value="T02187"/>
</dbReference>
<dbReference type="RefSeq" id="NP_001323911.1">
    <property type="nucleotide sequence ID" value="NM_001337237.1"/>
</dbReference>
<dbReference type="RefSeq" id="NP_001323914.1">
    <property type="nucleotide sequence ID" value="NM_001337236.1"/>
</dbReference>
<dbReference type="RefSeq" id="NP_182223.1">
    <property type="nucleotide sequence ID" value="NM_130268.4"/>
</dbReference>
<dbReference type="SMR" id="O80725"/>
<dbReference type="BioGRID" id="4649">
    <property type="interactions" value="20"/>
</dbReference>
<dbReference type="FunCoup" id="O80725">
    <property type="interactions" value="329"/>
</dbReference>
<dbReference type="STRING" id="3702.O80725"/>
<dbReference type="TCDB" id="3.A.1.201.7">
    <property type="family name" value="the atp-binding cassette (abc) superfamily"/>
</dbReference>
<dbReference type="GlyCosmos" id="O80725">
    <property type="glycosylation" value="9 sites, No reported glycans"/>
</dbReference>
<dbReference type="GlyGen" id="O80725">
    <property type="glycosylation" value="9 sites"/>
</dbReference>
<dbReference type="iPTMnet" id="O80725"/>
<dbReference type="SwissPalm" id="O80725"/>
<dbReference type="PaxDb" id="3702-AT2G47000.1"/>
<dbReference type="ProteomicsDB" id="244639"/>
<dbReference type="EnsemblPlants" id="AT2G47000.1">
    <property type="protein sequence ID" value="AT2G47000.1"/>
    <property type="gene ID" value="AT2G47000"/>
</dbReference>
<dbReference type="EnsemblPlants" id="AT2G47000.5">
    <property type="protein sequence ID" value="AT2G47000.5"/>
    <property type="gene ID" value="AT2G47000"/>
</dbReference>
<dbReference type="EnsemblPlants" id="AT2G47000.6">
    <property type="protein sequence ID" value="AT2G47000.6"/>
    <property type="gene ID" value="AT2G47000"/>
</dbReference>
<dbReference type="GeneID" id="819314"/>
<dbReference type="Gramene" id="AT2G47000.1">
    <property type="protein sequence ID" value="AT2G47000.1"/>
    <property type="gene ID" value="AT2G47000"/>
</dbReference>
<dbReference type="Gramene" id="AT2G47000.5">
    <property type="protein sequence ID" value="AT2G47000.5"/>
    <property type="gene ID" value="AT2G47000"/>
</dbReference>
<dbReference type="Gramene" id="AT2G47000.6">
    <property type="protein sequence ID" value="AT2G47000.6"/>
    <property type="gene ID" value="AT2G47000"/>
</dbReference>
<dbReference type="KEGG" id="ath:AT2G47000"/>
<dbReference type="Araport" id="AT2G47000"/>
<dbReference type="TAIR" id="AT2G47000">
    <property type="gene designation" value="ABCB4"/>
</dbReference>
<dbReference type="eggNOG" id="KOG0055">
    <property type="taxonomic scope" value="Eukaryota"/>
</dbReference>
<dbReference type="HOGENOM" id="CLU_000604_17_2_1"/>
<dbReference type="InParanoid" id="O80725"/>
<dbReference type="OMA" id="MAYFDTY"/>
<dbReference type="PhylomeDB" id="O80725"/>
<dbReference type="BioCyc" id="ARA:AT2G47000-MONOMER"/>
<dbReference type="PRO" id="PR:O80725"/>
<dbReference type="Proteomes" id="UP000006548">
    <property type="component" value="Chromosome 2"/>
</dbReference>
<dbReference type="ExpressionAtlas" id="O80725">
    <property type="expression patterns" value="baseline and differential"/>
</dbReference>
<dbReference type="GO" id="GO:0005829">
    <property type="term" value="C:cytosol"/>
    <property type="evidence" value="ECO:0007005"/>
    <property type="project" value="TAIR"/>
</dbReference>
<dbReference type="GO" id="GO:0016020">
    <property type="term" value="C:membrane"/>
    <property type="evidence" value="ECO:0000314"/>
    <property type="project" value="TAIR"/>
</dbReference>
<dbReference type="GO" id="GO:0005886">
    <property type="term" value="C:plasma membrane"/>
    <property type="evidence" value="ECO:0000314"/>
    <property type="project" value="TAIR"/>
</dbReference>
<dbReference type="GO" id="GO:0009506">
    <property type="term" value="C:plasmodesma"/>
    <property type="evidence" value="ECO:0007005"/>
    <property type="project" value="TAIR"/>
</dbReference>
<dbReference type="GO" id="GO:0008559">
    <property type="term" value="F:ABC-type xenobiotic transporter activity"/>
    <property type="evidence" value="ECO:0000314"/>
    <property type="project" value="TAIR"/>
</dbReference>
<dbReference type="GO" id="GO:0005524">
    <property type="term" value="F:ATP binding"/>
    <property type="evidence" value="ECO:0007669"/>
    <property type="project" value="UniProtKB-KW"/>
</dbReference>
<dbReference type="GO" id="GO:0016887">
    <property type="term" value="F:ATP hydrolysis activity"/>
    <property type="evidence" value="ECO:0007669"/>
    <property type="project" value="InterPro"/>
</dbReference>
<dbReference type="GO" id="GO:0010329">
    <property type="term" value="F:auxin efflux transmembrane transporter activity"/>
    <property type="evidence" value="ECO:0000314"/>
    <property type="project" value="TAIR"/>
</dbReference>
<dbReference type="GO" id="GO:0010328">
    <property type="term" value="F:auxin influx transmembrane transporter activity"/>
    <property type="evidence" value="ECO:0000314"/>
    <property type="project" value="TAIR"/>
</dbReference>
<dbReference type="GO" id="GO:0010315">
    <property type="term" value="P:auxin export across the plasma membrane"/>
    <property type="evidence" value="ECO:0000314"/>
    <property type="project" value="TAIR"/>
</dbReference>
<dbReference type="GO" id="GO:0060919">
    <property type="term" value="P:auxin import into cell"/>
    <property type="evidence" value="ECO:0000314"/>
    <property type="project" value="TAIR"/>
</dbReference>
<dbReference type="GO" id="GO:0009926">
    <property type="term" value="P:auxin polar transport"/>
    <property type="evidence" value="ECO:0000304"/>
    <property type="project" value="TAIR"/>
</dbReference>
<dbReference type="GO" id="GO:0009734">
    <property type="term" value="P:auxin-activated signaling pathway"/>
    <property type="evidence" value="ECO:0007669"/>
    <property type="project" value="UniProtKB-KW"/>
</dbReference>
<dbReference type="GO" id="GO:0010540">
    <property type="term" value="P:basipetal auxin transport"/>
    <property type="evidence" value="ECO:0000315"/>
    <property type="project" value="TAIR"/>
</dbReference>
<dbReference type="GO" id="GO:0009630">
    <property type="term" value="P:gravitropism"/>
    <property type="evidence" value="ECO:0000315"/>
    <property type="project" value="TAIR"/>
</dbReference>
<dbReference type="GO" id="GO:0009733">
    <property type="term" value="P:response to auxin"/>
    <property type="evidence" value="ECO:0000270"/>
    <property type="project" value="TAIR"/>
</dbReference>
<dbReference type="GO" id="GO:0009735">
    <property type="term" value="P:response to cytokinin"/>
    <property type="evidence" value="ECO:0000270"/>
    <property type="project" value="TAIR"/>
</dbReference>
<dbReference type="GO" id="GO:0048767">
    <property type="term" value="P:root hair elongation"/>
    <property type="evidence" value="ECO:0000315"/>
    <property type="project" value="TAIR"/>
</dbReference>
<dbReference type="CDD" id="cd18577">
    <property type="entry name" value="ABC_6TM_Pgp_ABCB1_D1_like"/>
    <property type="match status" value="1"/>
</dbReference>
<dbReference type="CDD" id="cd18578">
    <property type="entry name" value="ABC_6TM_Pgp_ABCB1_D2_like"/>
    <property type="match status" value="1"/>
</dbReference>
<dbReference type="CDD" id="cd03249">
    <property type="entry name" value="ABC_MTABC3_MDL1_MDL2"/>
    <property type="match status" value="2"/>
</dbReference>
<dbReference type="FunFam" id="1.20.1560.10:FF:000009">
    <property type="entry name" value="ABC transporter B family member 1"/>
    <property type="match status" value="1"/>
</dbReference>
<dbReference type="FunFam" id="3.40.50.300:FF:000066">
    <property type="entry name" value="ABC transporter B family member 1"/>
    <property type="match status" value="2"/>
</dbReference>
<dbReference type="FunFam" id="1.20.1560.10:FF:000025">
    <property type="entry name" value="ABC transporter B family member 9"/>
    <property type="match status" value="1"/>
</dbReference>
<dbReference type="FunFam" id="1.20.1560.10:FF:000044">
    <property type="entry name" value="ABC transporter B family member 9"/>
    <property type="match status" value="1"/>
</dbReference>
<dbReference type="Gene3D" id="1.20.1560.10">
    <property type="entry name" value="ABC transporter type 1, transmembrane domain"/>
    <property type="match status" value="1"/>
</dbReference>
<dbReference type="Gene3D" id="3.40.50.300">
    <property type="entry name" value="P-loop containing nucleotide triphosphate hydrolases"/>
    <property type="match status" value="2"/>
</dbReference>
<dbReference type="InterPro" id="IPR003593">
    <property type="entry name" value="AAA+_ATPase"/>
</dbReference>
<dbReference type="InterPro" id="IPR011527">
    <property type="entry name" value="ABC1_TM_dom"/>
</dbReference>
<dbReference type="InterPro" id="IPR036640">
    <property type="entry name" value="ABC1_TM_sf"/>
</dbReference>
<dbReference type="InterPro" id="IPR003439">
    <property type="entry name" value="ABC_transporter-like_ATP-bd"/>
</dbReference>
<dbReference type="InterPro" id="IPR017871">
    <property type="entry name" value="ABC_transporter-like_CS"/>
</dbReference>
<dbReference type="InterPro" id="IPR027417">
    <property type="entry name" value="P-loop_NTPase"/>
</dbReference>
<dbReference type="InterPro" id="IPR039421">
    <property type="entry name" value="Type_1_exporter"/>
</dbReference>
<dbReference type="PANTHER" id="PTHR43394:SF16">
    <property type="entry name" value="ABC TRANSPORTER B FAMILY MEMBER 4-LIKE ISOFORM X1"/>
    <property type="match status" value="1"/>
</dbReference>
<dbReference type="PANTHER" id="PTHR43394">
    <property type="entry name" value="ATP-DEPENDENT PERMEASE MDL1, MITOCHONDRIAL"/>
    <property type="match status" value="1"/>
</dbReference>
<dbReference type="Pfam" id="PF00664">
    <property type="entry name" value="ABC_membrane"/>
    <property type="match status" value="2"/>
</dbReference>
<dbReference type="Pfam" id="PF00005">
    <property type="entry name" value="ABC_tran"/>
    <property type="match status" value="2"/>
</dbReference>
<dbReference type="SMART" id="SM00382">
    <property type="entry name" value="AAA"/>
    <property type="match status" value="2"/>
</dbReference>
<dbReference type="SUPFAM" id="SSF90123">
    <property type="entry name" value="ABC transporter transmembrane region"/>
    <property type="match status" value="2"/>
</dbReference>
<dbReference type="SUPFAM" id="SSF52540">
    <property type="entry name" value="P-loop containing nucleoside triphosphate hydrolases"/>
    <property type="match status" value="2"/>
</dbReference>
<dbReference type="PROSITE" id="PS50929">
    <property type="entry name" value="ABC_TM1F"/>
    <property type="match status" value="2"/>
</dbReference>
<dbReference type="PROSITE" id="PS00211">
    <property type="entry name" value="ABC_TRANSPORTER_1"/>
    <property type="match status" value="2"/>
</dbReference>
<dbReference type="PROSITE" id="PS50893">
    <property type="entry name" value="ABC_TRANSPORTER_2"/>
    <property type="match status" value="2"/>
</dbReference>
<evidence type="ECO:0000255" key="1"/>
<evidence type="ECO:0000255" key="2">
    <source>
        <dbReference type="PROSITE-ProRule" id="PRU00434"/>
    </source>
</evidence>
<evidence type="ECO:0000255" key="3">
    <source>
        <dbReference type="PROSITE-ProRule" id="PRU00441"/>
    </source>
</evidence>
<evidence type="ECO:0000256" key="4">
    <source>
        <dbReference type="SAM" id="MobiDB-lite"/>
    </source>
</evidence>
<evidence type="ECO:0000269" key="5">
    <source>
    </source>
</evidence>
<evidence type="ECO:0000269" key="6">
    <source>
    </source>
</evidence>
<evidence type="ECO:0000305" key="7"/>
<evidence type="ECO:0007744" key="8">
    <source>
    </source>
</evidence>
<protein>
    <recommendedName>
        <fullName>ABC transporter B family member 4</fullName>
        <shortName>ABC transporter ABCB.4</shortName>
        <shortName>AtABCB4</shortName>
    </recommendedName>
    <alternativeName>
        <fullName>Multidrug resistance protein 4</fullName>
    </alternativeName>
    <alternativeName>
        <fullName>P-glycoprotein 4</fullName>
    </alternativeName>
</protein>
<comment type="function">
    <text evidence="5 6">Auxin influx transporter that mediates the transport of auxin in roots. Contributes to the basipetal transport in hypocotyls and root tips by establishing an auxin uptake sink in the root cap. Confers sensitivity to 1-N-naphthylphthalamic acid (NPA). Regulates the root elongation, the initiation of lateral roots and the development of root hairs. Can transport IAA, indole-3-propionic acid, NPA syringic acid, vanillic acid and some auxin metabolites, but not 2,4-D and 1-naphthaleneacetic acid.</text>
</comment>
<comment type="subunit">
    <text evidence="6">Interacts with 1-naphthylphthalamic acid (NPA).</text>
</comment>
<comment type="subcellular location">
    <subcellularLocation>
        <location evidence="6">Cell membrane</location>
        <topology evidence="3 6">Multi-pass membrane protein</topology>
    </subcellularLocation>
    <text>Non-polar distribution in apical cells. Apical (bottom) localization in mature root cells. Basal (top) localization in the root elongation zone.</text>
</comment>
<comment type="tissue specificity">
    <text evidence="5 6">Mostly expressed in roots, especially in the root elongation zone and lateral roots. In mature portion of the root, expressed in the epidermis and cortex. In the root elongation zone, confined to epidermis. In root tips, present in the root cap, S3 columella and epidermal cells.</text>
</comment>
<comment type="developmental stage">
    <text evidence="5">Highly expressed at early stages of root development.</text>
</comment>
<comment type="induction">
    <text evidence="6">By auxin, and cytokinins such as kinetin. Repressed by abscisic acid and cold treatment.</text>
</comment>
<comment type="PTM">
    <text>Phosphorylation level varies significantly during early response to bacterial elicitor.</text>
</comment>
<comment type="similarity">
    <text evidence="7">Belongs to the ABC transporter superfamily. ABCB family. Multidrug resistance exporter (TC 3.A.1.201) subfamily.</text>
</comment>
<reference key="1">
    <citation type="journal article" date="1999" name="Nature">
        <title>Sequence and analysis of chromosome 2 of the plant Arabidopsis thaliana.</title>
        <authorList>
            <person name="Lin X."/>
            <person name="Kaul S."/>
            <person name="Rounsley S.D."/>
            <person name="Shea T.P."/>
            <person name="Benito M.-I."/>
            <person name="Town C.D."/>
            <person name="Fujii C.Y."/>
            <person name="Mason T.M."/>
            <person name="Bowman C.L."/>
            <person name="Barnstead M.E."/>
            <person name="Feldblyum T.V."/>
            <person name="Buell C.R."/>
            <person name="Ketchum K.A."/>
            <person name="Lee J.J."/>
            <person name="Ronning C.M."/>
            <person name="Koo H.L."/>
            <person name="Moffat K.S."/>
            <person name="Cronin L.A."/>
            <person name="Shen M."/>
            <person name="Pai G."/>
            <person name="Van Aken S."/>
            <person name="Umayam L."/>
            <person name="Tallon L.J."/>
            <person name="Gill J.E."/>
            <person name="Adams M.D."/>
            <person name="Carrera A.J."/>
            <person name="Creasy T.H."/>
            <person name="Goodman H.M."/>
            <person name="Somerville C.R."/>
            <person name="Copenhaver G.P."/>
            <person name="Preuss D."/>
            <person name="Nierman W.C."/>
            <person name="White O."/>
            <person name="Eisen J.A."/>
            <person name="Salzberg S.L."/>
            <person name="Fraser C.M."/>
            <person name="Venter J.C."/>
        </authorList>
    </citation>
    <scope>NUCLEOTIDE SEQUENCE [LARGE SCALE GENOMIC DNA]</scope>
    <source>
        <strain>cv. Columbia</strain>
    </source>
</reference>
<reference key="2">
    <citation type="journal article" date="2017" name="Plant J.">
        <title>Araport11: a complete reannotation of the Arabidopsis thaliana reference genome.</title>
        <authorList>
            <person name="Cheng C.Y."/>
            <person name="Krishnakumar V."/>
            <person name="Chan A.P."/>
            <person name="Thibaud-Nissen F."/>
            <person name="Schobel S."/>
            <person name="Town C.D."/>
        </authorList>
    </citation>
    <scope>GENOME REANNOTATION</scope>
    <source>
        <strain>cv. Columbia</strain>
    </source>
</reference>
<reference key="3">
    <citation type="journal article" date="2005" name="Plant Cell">
        <title>PGP4, an ATP binding cassette P-glycoprotein, catalyzes auxin transport in Arabidopsis thaliana roots.</title>
        <authorList>
            <person name="Terasaka K."/>
            <person name="Blakeslee J.J."/>
            <person name="Titapiwatanakun B."/>
            <person name="Peer W.A."/>
            <person name="Bandyopadhyay A."/>
            <person name="Makam S.N."/>
            <person name="Lee O.R."/>
            <person name="Richards E.L."/>
            <person name="Murphy A.S."/>
            <person name="Sato F."/>
            <person name="Yazaki K."/>
        </authorList>
    </citation>
    <scope>PROTEIN SEQUENCE OF 25-31; 317-333 AND 1202-1218</scope>
    <scope>FUNCTION</scope>
    <scope>INDUCTION</scope>
    <scope>INTERACTION WITH NPA</scope>
    <scope>TISSUE SPECIFICITY</scope>
    <scope>SUBCELLULAR LOCATION</scope>
</reference>
<reference key="4">
    <citation type="journal article" date="2001" name="J. Biol. Chem.">
        <title>The Arabidopsis thaliana ABC protein superfamily, a complete inventory.</title>
        <authorList>
            <person name="Sanchez-Fernandez R."/>
            <person name="Davies T.G."/>
            <person name="Coleman J.O."/>
            <person name="Rea P.A."/>
        </authorList>
    </citation>
    <scope>GENE FAMILY</scope>
    <scope>NOMENCLATURE</scope>
</reference>
<reference key="5">
    <citation type="journal article" date="2004" name="Plant Cell">
        <title>Phosphoproteomics of the Arabidopsis plasma membrane and a new phosphorylation site database.</title>
        <authorList>
            <person name="Nuehse T.S."/>
            <person name="Stensballe A."/>
            <person name="Jensen O.N."/>
            <person name="Peck S.C."/>
        </authorList>
    </citation>
    <scope>PHOSPHORYLATION [LARGE SCALE ANALYSIS] AT SER-671</scope>
    <scope>IDENTIFICATION BY MASS SPECTROMETRY [LARGE SCALE ANALYSIS]</scope>
</reference>
<reference key="6">
    <citation type="journal article" date="2005" name="FEBS Lett.">
        <title>MDR-like ABC transporter AtPGP4 is involved in auxin-mediated lateral root and root hair development.</title>
        <authorList>
            <person name="Santelia D."/>
            <person name="Vincenzetti V."/>
            <person name="Azzarello E."/>
            <person name="Bovet L."/>
            <person name="Fukao Y."/>
            <person name="Duechtig P."/>
            <person name="Mancuso S."/>
            <person name="Martinoia E."/>
            <person name="Geisler M."/>
        </authorList>
    </citation>
    <scope>FUNCTION</scope>
    <scope>TISSUE SPECIFICITY</scope>
    <scope>DEVELOPMENTAL STAGE</scope>
</reference>
<reference key="7">
    <citation type="journal article" date="2008" name="Trends Plant Sci.">
        <title>Plant ABC proteins - a unified nomenclature and updated inventory.</title>
        <authorList>
            <person name="Verrier P.J."/>
            <person name="Bird D."/>
            <person name="Burla B."/>
            <person name="Dassa E."/>
            <person name="Forestier C."/>
            <person name="Geisler M."/>
            <person name="Klein M."/>
            <person name="Kolukisaoglu H.U."/>
            <person name="Lee Y."/>
            <person name="Martinoia E."/>
            <person name="Murphy A."/>
            <person name="Rea P.A."/>
            <person name="Samuels L."/>
            <person name="Schulz B."/>
            <person name="Spalding E.J."/>
            <person name="Yazaki K."/>
            <person name="Theodoulou F.L."/>
        </authorList>
    </citation>
    <scope>GENE FAMILY</scope>
    <scope>NOMENCLATURE</scope>
</reference>
<feature type="chain" id="PRO_0000227915" description="ABC transporter B family member 4">
    <location>
        <begin position="1"/>
        <end position="1286"/>
    </location>
</feature>
<feature type="transmembrane region" description="Helical" evidence="3">
    <location>
        <begin position="60"/>
        <end position="80"/>
    </location>
</feature>
<feature type="transmembrane region" description="Helical" evidence="3">
    <location>
        <begin position="109"/>
        <end position="129"/>
    </location>
</feature>
<feature type="transmembrane region" description="Helical" evidence="3">
    <location>
        <begin position="186"/>
        <end position="206"/>
    </location>
</feature>
<feature type="transmembrane region" description="Helical" evidence="3">
    <location>
        <begin position="208"/>
        <end position="228"/>
    </location>
</feature>
<feature type="transmembrane region" description="Helical" evidence="3">
    <location>
        <begin position="288"/>
        <end position="308"/>
    </location>
</feature>
<feature type="transmembrane region" description="Helical" evidence="3">
    <location>
        <begin position="317"/>
        <end position="337"/>
    </location>
</feature>
<feature type="transmembrane region" description="Helical" evidence="3">
    <location>
        <begin position="721"/>
        <end position="741"/>
    </location>
</feature>
<feature type="transmembrane region" description="Helical" evidence="3">
    <location>
        <begin position="764"/>
        <end position="784"/>
    </location>
</feature>
<feature type="transmembrane region" description="Helical" evidence="3">
    <location>
        <begin position="850"/>
        <end position="870"/>
    </location>
</feature>
<feature type="transmembrane region" description="Helical" evidence="3">
    <location>
        <begin position="871"/>
        <end position="891"/>
    </location>
</feature>
<feature type="transmembrane region" description="Helical" evidence="3">
    <location>
        <begin position="942"/>
        <end position="962"/>
    </location>
</feature>
<feature type="transmembrane region" description="Helical" evidence="3">
    <location>
        <begin position="976"/>
        <end position="996"/>
    </location>
</feature>
<feature type="domain" description="ABC transmembrane type-1 1" evidence="3">
    <location>
        <begin position="63"/>
        <end position="349"/>
    </location>
</feature>
<feature type="domain" description="ABC transporter 1" evidence="2">
    <location>
        <begin position="384"/>
        <end position="620"/>
    </location>
</feature>
<feature type="domain" description="ABC transmembrane type-1 2" evidence="3">
    <location>
        <begin position="720"/>
        <end position="1007"/>
    </location>
</feature>
<feature type="domain" description="ABC transporter 2" evidence="2">
    <location>
        <begin position="1042"/>
        <end position="1279"/>
    </location>
</feature>
<feature type="region of interest" description="Disordered" evidence="4">
    <location>
        <begin position="1"/>
        <end position="39"/>
    </location>
</feature>
<feature type="region of interest" description="Disordered" evidence="4">
    <location>
        <begin position="625"/>
        <end position="669"/>
    </location>
</feature>
<feature type="compositionally biased region" description="Basic and acidic residues" evidence="4">
    <location>
        <begin position="18"/>
        <end position="39"/>
    </location>
</feature>
<feature type="compositionally biased region" description="Basic and acidic residues" evidence="4">
    <location>
        <begin position="625"/>
        <end position="636"/>
    </location>
</feature>
<feature type="compositionally biased region" description="Low complexity" evidence="4">
    <location>
        <begin position="646"/>
        <end position="669"/>
    </location>
</feature>
<feature type="binding site" evidence="2">
    <location>
        <begin position="419"/>
        <end position="426"/>
    </location>
    <ligand>
        <name>ATP</name>
        <dbReference type="ChEBI" id="CHEBI:30616"/>
        <label>1</label>
    </ligand>
</feature>
<feature type="binding site" evidence="2">
    <location>
        <begin position="1077"/>
        <end position="1084"/>
    </location>
    <ligand>
        <name>ATP</name>
        <dbReference type="ChEBI" id="CHEBI:30616"/>
        <label>2</label>
    </ligand>
</feature>
<feature type="modified residue" description="Phosphoserine" evidence="8">
    <location>
        <position position="671"/>
    </location>
</feature>
<feature type="glycosylation site" description="N-linked (GlcNAc...) asparagine" evidence="1">
    <location>
        <position position="94"/>
    </location>
</feature>
<feature type="glycosylation site" description="N-linked (GlcNAc...) asparagine" evidence="1">
    <location>
        <position position="97"/>
    </location>
</feature>
<feature type="glycosylation site" description="N-linked (GlcNAc...) asparagine" evidence="1">
    <location>
        <position position="500"/>
    </location>
</feature>
<feature type="glycosylation site" description="N-linked (GlcNAc...) asparagine" evidence="1">
    <location>
        <position position="571"/>
    </location>
</feature>
<feature type="glycosylation site" description="N-linked (GlcNAc...) asparagine" evidence="1">
    <location>
        <position position="666"/>
    </location>
</feature>
<feature type="glycosylation site" description="N-linked (GlcNAc...) asparagine" evidence="1">
    <location>
        <position position="816"/>
    </location>
</feature>
<feature type="glycosylation site" description="N-linked (GlcNAc...) asparagine" evidence="1">
    <location>
        <position position="846"/>
    </location>
</feature>
<feature type="glycosylation site" description="N-linked (GlcNAc...) asparagine" evidence="1">
    <location>
        <position position="1131"/>
    </location>
</feature>
<feature type="glycosylation site" description="N-linked (GlcNAc...) asparagine" evidence="1">
    <location>
        <position position="1230"/>
    </location>
</feature>
<name>AB4B_ARATH</name>
<keyword id="KW-0067">ATP-binding</keyword>
<keyword id="KW-0927">Auxin signaling pathway</keyword>
<keyword id="KW-1003">Cell membrane</keyword>
<keyword id="KW-0903">Direct protein sequencing</keyword>
<keyword id="KW-0325">Glycoprotein</keyword>
<keyword id="KW-0472">Membrane</keyword>
<keyword id="KW-0547">Nucleotide-binding</keyword>
<keyword id="KW-0597">Phosphoprotein</keyword>
<keyword id="KW-1185">Reference proteome</keyword>
<keyword id="KW-0677">Repeat</keyword>
<keyword id="KW-0812">Transmembrane</keyword>
<keyword id="KW-1133">Transmembrane helix</keyword>
<keyword id="KW-0813">Transport</keyword>
<proteinExistence type="evidence at protein level"/>
<gene>
    <name type="primary">ABCB4</name>
    <name type="synonym">MDR4</name>
    <name type="synonym">PGP4</name>
    <name type="ordered locus">At2g47000</name>
    <name type="ORF">F14M4.17</name>
</gene>
<accession>O80725</accession>
<organism>
    <name type="scientific">Arabidopsis thaliana</name>
    <name type="common">Mouse-ear cress</name>
    <dbReference type="NCBI Taxonomy" id="3702"/>
    <lineage>
        <taxon>Eukaryota</taxon>
        <taxon>Viridiplantae</taxon>
        <taxon>Streptophyta</taxon>
        <taxon>Embryophyta</taxon>
        <taxon>Tracheophyta</taxon>
        <taxon>Spermatophyta</taxon>
        <taxon>Magnoliopsida</taxon>
        <taxon>eudicotyledons</taxon>
        <taxon>Gunneridae</taxon>
        <taxon>Pentapetalae</taxon>
        <taxon>rosids</taxon>
        <taxon>malvids</taxon>
        <taxon>Brassicales</taxon>
        <taxon>Brassicaceae</taxon>
        <taxon>Camelineae</taxon>
        <taxon>Arabidopsis</taxon>
    </lineage>
</organism>
<sequence>MASESGLNGDPNILEEVSETKRDKEEEEEVKKTEKKDEEHEKTKTVPFYKLFAFADSFDFLLMILGTLGSIGNGLGFPLMTLLFGDLIDAFGENQTNTTDKVSKVALKFVWLGIGTFAAAFLQLSGWMISGERQAARIRSLYLKTILRQDIAFFDIDTNTGEVVGRMSGDTVLIQDAMGEKVGKAIQLLATFVGGFVIAFVRGWLLTLVMLSSIPLLVMAGALLAIVIAKTASRGQTAYAKAATVVEQTIGSIRTVASFTGEKQAISNYNKHLVTAYKAGVIEGGSTGLGLGTLFLVVFCSYALAVWYGGKLILDKGYTGGQVLNIIIAVLTGSMSLGQTSPCLSAFAAGQAAAYKMFETIERRPNIDSYSTNGKVLDDIKGDIELKDVYFTYPARPDEQIFRGFSLFISSGTTVALVGQSGSGKSTVVSLIERFYDPQAGDVLIDGINLKEFQLKWIRSKIGLVSQEPVLFTASIKDNIAYGKEDATTEEIKAAAELANASKFVDKLPQGLDTMVGEHGTQLSGGQKQRIAVARAILKDPRILLLDEATSALDAESERVVQEALDRIMVNRTTVVVAHRLSTVRNADMIAVIHQGKIVEKGSHTELLKDPEGAYSQLIRLQEEKKSDENAAEEQKMSSIESFKQSSLRKSSLGRSLSKGGSSRGNSSRHSFNMFGFPAGIDGNVVQDQEEDDTTQPKTEPKKVSIFRIAALNKPEIPVLILGSISAAANGVILPIFGILISSVIKAFFQPPKKLKEDTSFWAIIFMVLGFASIIAYPAQTFFFAIAGCKLVQRIRSMCFEKVVHMEVGWFDEPENSSGTIGARLSADAATIRGLVGDSLAQTVQNLSSILAGLIIAFLACWQLAFVVLAMLPLIALNGFLYMKFMKGFSADAKKMYGEASQVANDAVGSIRTVASFCAEDKVMNMYSKKCEGPMKNGIRQGIVSGIGFGFSFFVLFSSYAASFYVGARLVDDGKTTFDSVFRVFFALTMAAMAISQSSSLSPDSSKADVAAASIFAIMDRESKIDPSVESGRVLDNVKGDIELRHVSFKYPARPDVQIFQDLCLSIRAGKTVALVGESGSGKSTVIALLQRFYDPDSGEITLDGVEIKSLRLKWLRQQTGLVSQEPILFNETIRANIAYGKGGDASESEIVSSAELSNAHGFISGLQQGYDTMVGERGIQLSGGQKQRVAIARAIVKDPKVLLLDEATSALDAESERVVQDALDRVMVNRTTIVVAHRLSTIKNADVIAVVKNGVIVEKGKHDTLINIKDGVYASLVQLHLTAAS</sequence>